<gene>
    <name evidence="1" type="primary">rpoA</name>
    <name type="ordered locus">CPE2376</name>
</gene>
<accession>P0C2E6</accession>
<accession>Q9LBW9</accession>
<dbReference type="EC" id="2.7.7.6" evidence="1"/>
<dbReference type="EMBL" id="BA000016">
    <property type="protein sequence ID" value="BAB82082.1"/>
    <property type="molecule type" value="Genomic_DNA"/>
</dbReference>
<dbReference type="RefSeq" id="WP_003454404.1">
    <property type="nucleotide sequence ID" value="NC_003366.1"/>
</dbReference>
<dbReference type="SMR" id="P0C2E6"/>
<dbReference type="STRING" id="195102.gene:10491693"/>
<dbReference type="KEGG" id="cpe:CPE2376"/>
<dbReference type="HOGENOM" id="CLU_053084_0_1_9"/>
<dbReference type="Proteomes" id="UP000000818">
    <property type="component" value="Chromosome"/>
</dbReference>
<dbReference type="GO" id="GO:0005737">
    <property type="term" value="C:cytoplasm"/>
    <property type="evidence" value="ECO:0007669"/>
    <property type="project" value="UniProtKB-ARBA"/>
</dbReference>
<dbReference type="GO" id="GO:0000428">
    <property type="term" value="C:DNA-directed RNA polymerase complex"/>
    <property type="evidence" value="ECO:0007669"/>
    <property type="project" value="UniProtKB-KW"/>
</dbReference>
<dbReference type="GO" id="GO:0003677">
    <property type="term" value="F:DNA binding"/>
    <property type="evidence" value="ECO:0007669"/>
    <property type="project" value="UniProtKB-UniRule"/>
</dbReference>
<dbReference type="GO" id="GO:0003899">
    <property type="term" value="F:DNA-directed RNA polymerase activity"/>
    <property type="evidence" value="ECO:0007669"/>
    <property type="project" value="UniProtKB-UniRule"/>
</dbReference>
<dbReference type="GO" id="GO:0046983">
    <property type="term" value="F:protein dimerization activity"/>
    <property type="evidence" value="ECO:0007669"/>
    <property type="project" value="InterPro"/>
</dbReference>
<dbReference type="GO" id="GO:0006351">
    <property type="term" value="P:DNA-templated transcription"/>
    <property type="evidence" value="ECO:0007669"/>
    <property type="project" value="UniProtKB-UniRule"/>
</dbReference>
<dbReference type="CDD" id="cd06928">
    <property type="entry name" value="RNAP_alpha_NTD"/>
    <property type="match status" value="1"/>
</dbReference>
<dbReference type="FunFam" id="2.170.120.12:FF:000001">
    <property type="entry name" value="DNA-directed RNA polymerase subunit alpha"/>
    <property type="match status" value="1"/>
</dbReference>
<dbReference type="Gene3D" id="1.10.150.20">
    <property type="entry name" value="5' to 3' exonuclease, C-terminal subdomain"/>
    <property type="match status" value="1"/>
</dbReference>
<dbReference type="Gene3D" id="2.170.120.12">
    <property type="entry name" value="DNA-directed RNA polymerase, insert domain"/>
    <property type="match status" value="1"/>
</dbReference>
<dbReference type="Gene3D" id="3.30.1360.10">
    <property type="entry name" value="RNA polymerase, RBP11-like subunit"/>
    <property type="match status" value="1"/>
</dbReference>
<dbReference type="HAMAP" id="MF_00059">
    <property type="entry name" value="RNApol_bact_RpoA"/>
    <property type="match status" value="1"/>
</dbReference>
<dbReference type="InterPro" id="IPR011262">
    <property type="entry name" value="DNA-dir_RNA_pol_insert"/>
</dbReference>
<dbReference type="InterPro" id="IPR011263">
    <property type="entry name" value="DNA-dir_RNA_pol_RpoA/D/Rpb3"/>
</dbReference>
<dbReference type="InterPro" id="IPR011773">
    <property type="entry name" value="DNA-dir_RpoA"/>
</dbReference>
<dbReference type="InterPro" id="IPR036603">
    <property type="entry name" value="RBP11-like"/>
</dbReference>
<dbReference type="InterPro" id="IPR011260">
    <property type="entry name" value="RNAP_asu_C"/>
</dbReference>
<dbReference type="InterPro" id="IPR036643">
    <property type="entry name" value="RNApol_insert_sf"/>
</dbReference>
<dbReference type="NCBIfam" id="NF003513">
    <property type="entry name" value="PRK05182.1-2"/>
    <property type="match status" value="1"/>
</dbReference>
<dbReference type="NCBIfam" id="NF003515">
    <property type="entry name" value="PRK05182.2-1"/>
    <property type="match status" value="1"/>
</dbReference>
<dbReference type="NCBIfam" id="NF003519">
    <property type="entry name" value="PRK05182.2-5"/>
    <property type="match status" value="1"/>
</dbReference>
<dbReference type="NCBIfam" id="TIGR02027">
    <property type="entry name" value="rpoA"/>
    <property type="match status" value="1"/>
</dbReference>
<dbReference type="Pfam" id="PF01000">
    <property type="entry name" value="RNA_pol_A_bac"/>
    <property type="match status" value="1"/>
</dbReference>
<dbReference type="Pfam" id="PF03118">
    <property type="entry name" value="RNA_pol_A_CTD"/>
    <property type="match status" value="1"/>
</dbReference>
<dbReference type="Pfam" id="PF01193">
    <property type="entry name" value="RNA_pol_L"/>
    <property type="match status" value="1"/>
</dbReference>
<dbReference type="SMART" id="SM00662">
    <property type="entry name" value="RPOLD"/>
    <property type="match status" value="1"/>
</dbReference>
<dbReference type="SUPFAM" id="SSF47789">
    <property type="entry name" value="C-terminal domain of RNA polymerase alpha subunit"/>
    <property type="match status" value="1"/>
</dbReference>
<dbReference type="SUPFAM" id="SSF56553">
    <property type="entry name" value="Insert subdomain of RNA polymerase alpha subunit"/>
    <property type="match status" value="1"/>
</dbReference>
<dbReference type="SUPFAM" id="SSF55257">
    <property type="entry name" value="RBP11-like subunits of RNA polymerase"/>
    <property type="match status" value="1"/>
</dbReference>
<protein>
    <recommendedName>
        <fullName evidence="1">DNA-directed RNA polymerase subunit alpha</fullName>
        <shortName evidence="1">RNAP subunit alpha</shortName>
        <ecNumber evidence="1">2.7.7.6</ecNumber>
    </recommendedName>
    <alternativeName>
        <fullName evidence="1">RNA polymerase subunit alpha</fullName>
    </alternativeName>
    <alternativeName>
        <fullName evidence="1">Transcriptase subunit alpha</fullName>
    </alternativeName>
</protein>
<reference key="1">
    <citation type="journal article" date="2002" name="Proc. Natl. Acad. Sci. U.S.A.">
        <title>Complete genome sequence of Clostridium perfringens, an anaerobic flesh-eater.</title>
        <authorList>
            <person name="Shimizu T."/>
            <person name="Ohtani K."/>
            <person name="Hirakawa H."/>
            <person name="Ohshima K."/>
            <person name="Yamashita A."/>
            <person name="Shiba T."/>
            <person name="Ogasawara N."/>
            <person name="Hattori M."/>
            <person name="Kuhara S."/>
            <person name="Hayashi H."/>
        </authorList>
    </citation>
    <scope>NUCLEOTIDE SEQUENCE [LARGE SCALE GENOMIC DNA]</scope>
    <source>
        <strain>13 / Type A</strain>
    </source>
</reference>
<organism>
    <name type="scientific">Clostridium perfringens (strain 13 / Type A)</name>
    <dbReference type="NCBI Taxonomy" id="195102"/>
    <lineage>
        <taxon>Bacteria</taxon>
        <taxon>Bacillati</taxon>
        <taxon>Bacillota</taxon>
        <taxon>Clostridia</taxon>
        <taxon>Eubacteriales</taxon>
        <taxon>Clostridiaceae</taxon>
        <taxon>Clostridium</taxon>
    </lineage>
</organism>
<keyword id="KW-0240">DNA-directed RNA polymerase</keyword>
<keyword id="KW-0548">Nucleotidyltransferase</keyword>
<keyword id="KW-1185">Reference proteome</keyword>
<keyword id="KW-0804">Transcription</keyword>
<keyword id="KW-0808">Transferase</keyword>
<evidence type="ECO:0000255" key="1">
    <source>
        <dbReference type="HAMAP-Rule" id="MF_00059"/>
    </source>
</evidence>
<name>RPOA_CLOPE</name>
<feature type="chain" id="PRO_0000175295" description="DNA-directed RNA polymerase subunit alpha">
    <location>
        <begin position="1"/>
        <end position="315"/>
    </location>
</feature>
<feature type="region of interest" description="Alpha N-terminal domain (alpha-NTD)" evidence="1">
    <location>
        <begin position="1"/>
        <end position="228"/>
    </location>
</feature>
<feature type="region of interest" description="Alpha C-terminal domain (alpha-CTD)" evidence="1">
    <location>
        <begin position="244"/>
        <end position="315"/>
    </location>
</feature>
<sequence length="315" mass="35176">MLEIEKPVIQCVESNDNGTYGKFEIEPLERGYGITLGNALRRILLSSLPGVAPTSVKIDSVLHEFSTITGVKEDVTEIILNLKMLALTMEGEGPKTIYIDAQGPGVVTGADIKTDGDVEVVNKDLHIATLDNDGKLYMEIVVNRGRGYVTQNKNKTEDLPLSAIAIDSIYTPVKRVNFSVQNTRVGQITDYDKLTLEIWTNGTIRIEEAISLSAKILIEHFKLFMTLTDNANDVEIMIEKEEDKKEKALEMTIEELDLSVRSYNCLKRAGINTVQELAGKSMDDMMKVRNLGKKSLEEVERKLNELGLNLRLNDE</sequence>
<comment type="function">
    <text evidence="1">DNA-dependent RNA polymerase catalyzes the transcription of DNA into RNA using the four ribonucleoside triphosphates as substrates.</text>
</comment>
<comment type="catalytic activity">
    <reaction evidence="1">
        <text>RNA(n) + a ribonucleoside 5'-triphosphate = RNA(n+1) + diphosphate</text>
        <dbReference type="Rhea" id="RHEA:21248"/>
        <dbReference type="Rhea" id="RHEA-COMP:14527"/>
        <dbReference type="Rhea" id="RHEA-COMP:17342"/>
        <dbReference type="ChEBI" id="CHEBI:33019"/>
        <dbReference type="ChEBI" id="CHEBI:61557"/>
        <dbReference type="ChEBI" id="CHEBI:140395"/>
        <dbReference type="EC" id="2.7.7.6"/>
    </reaction>
</comment>
<comment type="subunit">
    <text evidence="1">Homodimer. The RNAP catalytic core consists of 2 alpha, 1 beta, 1 beta' and 1 omega subunit. When a sigma factor is associated with the core the holoenzyme is formed, which can initiate transcription.</text>
</comment>
<comment type="domain">
    <text evidence="1">The N-terminal domain is essential for RNAP assembly and basal transcription, whereas the C-terminal domain is involved in interaction with transcriptional regulators and with upstream promoter elements.</text>
</comment>
<comment type="similarity">
    <text evidence="1">Belongs to the RNA polymerase alpha chain family.</text>
</comment>
<proteinExistence type="inferred from homology"/>